<feature type="chain" id="PRO_0000371521" description="Mannitol-1-phosphate 5-dehydrogenase">
    <location>
        <begin position="1"/>
        <end position="388"/>
    </location>
</feature>
<feature type="active site" evidence="1">
    <location>
        <position position="213"/>
    </location>
</feature>
<feature type="binding site" evidence="1">
    <location>
        <begin position="5"/>
        <end position="16"/>
    </location>
    <ligand>
        <name>NAD(+)</name>
        <dbReference type="ChEBI" id="CHEBI:57540"/>
    </ligand>
</feature>
<organism>
    <name type="scientific">Aspergillus niger (strain ATCC MYA-4892 / CBS 513.88 / FGSC A1513)</name>
    <dbReference type="NCBI Taxonomy" id="425011"/>
    <lineage>
        <taxon>Eukaryota</taxon>
        <taxon>Fungi</taxon>
        <taxon>Dikarya</taxon>
        <taxon>Ascomycota</taxon>
        <taxon>Pezizomycotina</taxon>
        <taxon>Eurotiomycetes</taxon>
        <taxon>Eurotiomycetidae</taxon>
        <taxon>Eurotiales</taxon>
        <taxon>Aspergillaceae</taxon>
        <taxon>Aspergillus</taxon>
        <taxon>Aspergillus subgen. Circumdati</taxon>
    </lineage>
</organism>
<proteinExistence type="inferred from homology"/>
<protein>
    <recommendedName>
        <fullName>Mannitol-1-phosphate 5-dehydrogenase</fullName>
        <shortName>M1PDH</shortName>
        <shortName>MPD</shortName>
        <shortName>MPDH</shortName>
        <ecNumber>1.1.1.17</ecNumber>
    </recommendedName>
</protein>
<accession>A2QD49</accession>
<dbReference type="EC" id="1.1.1.17"/>
<dbReference type="EMBL" id="AM270011">
    <property type="protein sequence ID" value="CAK47711.1"/>
    <property type="molecule type" value="Genomic_DNA"/>
</dbReference>
<dbReference type="RefSeq" id="XP_001399719.1">
    <property type="nucleotide sequence ID" value="XM_001399682.2"/>
</dbReference>
<dbReference type="SMR" id="A2QD49"/>
<dbReference type="EnsemblFungi" id="CAK47711">
    <property type="protein sequence ID" value="CAK47711"/>
    <property type="gene ID" value="An02g05830"/>
</dbReference>
<dbReference type="GeneID" id="4979072"/>
<dbReference type="KEGG" id="ang:An02g05830"/>
<dbReference type="VEuPathDB" id="FungiDB:An02g05830"/>
<dbReference type="HOGENOM" id="CLU_036089_0_1_1"/>
<dbReference type="Proteomes" id="UP000006706">
    <property type="component" value="Chromosome 4R"/>
</dbReference>
<dbReference type="GO" id="GO:0005829">
    <property type="term" value="C:cytosol"/>
    <property type="evidence" value="ECO:0007669"/>
    <property type="project" value="TreeGrafter"/>
</dbReference>
<dbReference type="GO" id="GO:0008926">
    <property type="term" value="F:mannitol-1-phosphate 5-dehydrogenase activity"/>
    <property type="evidence" value="ECO:0007669"/>
    <property type="project" value="UniProtKB-EC"/>
</dbReference>
<dbReference type="GO" id="GO:0034605">
    <property type="term" value="P:cellular response to heat"/>
    <property type="evidence" value="ECO:0000315"/>
    <property type="project" value="AspGD"/>
</dbReference>
<dbReference type="GO" id="GO:0034599">
    <property type="term" value="P:cellular response to oxidative stress"/>
    <property type="evidence" value="ECO:0000315"/>
    <property type="project" value="AspGD"/>
</dbReference>
<dbReference type="GO" id="GO:0019593">
    <property type="term" value="P:mannitol biosynthetic process"/>
    <property type="evidence" value="ECO:0000315"/>
    <property type="project" value="AspGD"/>
</dbReference>
<dbReference type="GO" id="GO:0019592">
    <property type="term" value="P:mannitol catabolic process"/>
    <property type="evidence" value="ECO:0007669"/>
    <property type="project" value="TreeGrafter"/>
</dbReference>
<dbReference type="FunFam" id="1.10.1040.10:FF:000009">
    <property type="entry name" value="Mannitol-1-phosphate 5-dehydrogenase"/>
    <property type="match status" value="1"/>
</dbReference>
<dbReference type="FunFam" id="3.40.50.720:FF:000316">
    <property type="entry name" value="Mannitol-1-phosphate 5-dehydrogenase"/>
    <property type="match status" value="1"/>
</dbReference>
<dbReference type="Gene3D" id="1.10.1040.10">
    <property type="entry name" value="N-(1-d-carboxylethyl)-l-norvaline Dehydrogenase, domain 2"/>
    <property type="match status" value="1"/>
</dbReference>
<dbReference type="Gene3D" id="3.40.50.720">
    <property type="entry name" value="NAD(P)-binding Rossmann-like Domain"/>
    <property type="match status" value="1"/>
</dbReference>
<dbReference type="HAMAP" id="MF_00196">
    <property type="entry name" value="Mannitol_dehydrog"/>
    <property type="match status" value="1"/>
</dbReference>
<dbReference type="InterPro" id="IPR008927">
    <property type="entry name" value="6-PGluconate_DH-like_C_sf"/>
</dbReference>
<dbReference type="InterPro" id="IPR013328">
    <property type="entry name" value="6PGD_dom2"/>
</dbReference>
<dbReference type="InterPro" id="IPR023028">
    <property type="entry name" value="Mannitol_1_phos_5_DH"/>
</dbReference>
<dbReference type="InterPro" id="IPR000669">
    <property type="entry name" value="Mannitol_DH"/>
</dbReference>
<dbReference type="InterPro" id="IPR013118">
    <property type="entry name" value="Mannitol_DH_C"/>
</dbReference>
<dbReference type="InterPro" id="IPR013131">
    <property type="entry name" value="Mannitol_DH_N"/>
</dbReference>
<dbReference type="InterPro" id="IPR036291">
    <property type="entry name" value="NAD(P)-bd_dom_sf"/>
</dbReference>
<dbReference type="NCBIfam" id="NF002647">
    <property type="entry name" value="PRK02318.1-3"/>
    <property type="match status" value="1"/>
</dbReference>
<dbReference type="NCBIfam" id="NF002652">
    <property type="entry name" value="PRK02318.2-5"/>
    <property type="match status" value="1"/>
</dbReference>
<dbReference type="PANTHER" id="PTHR30524:SF0">
    <property type="entry name" value="ALTRONATE OXIDOREDUCTASE-RELATED"/>
    <property type="match status" value="1"/>
</dbReference>
<dbReference type="PANTHER" id="PTHR30524">
    <property type="entry name" value="MANNITOL-1-PHOSPHATE 5-DEHYDROGENASE"/>
    <property type="match status" value="1"/>
</dbReference>
<dbReference type="Pfam" id="PF01232">
    <property type="entry name" value="Mannitol_dh"/>
    <property type="match status" value="1"/>
</dbReference>
<dbReference type="Pfam" id="PF08125">
    <property type="entry name" value="Mannitol_dh_C"/>
    <property type="match status" value="1"/>
</dbReference>
<dbReference type="PRINTS" id="PR00084">
    <property type="entry name" value="MTLDHDRGNASE"/>
</dbReference>
<dbReference type="SUPFAM" id="SSF48179">
    <property type="entry name" value="6-phosphogluconate dehydrogenase C-terminal domain-like"/>
    <property type="match status" value="1"/>
</dbReference>
<dbReference type="SUPFAM" id="SSF51735">
    <property type="entry name" value="NAD(P)-binding Rossmann-fold domains"/>
    <property type="match status" value="1"/>
</dbReference>
<name>MTLD_ASPNC</name>
<evidence type="ECO:0000250" key="1"/>
<evidence type="ECO:0000305" key="2"/>
<reference key="1">
    <citation type="journal article" date="2007" name="Nat. Biotechnol.">
        <title>Genome sequencing and analysis of the versatile cell factory Aspergillus niger CBS 513.88.</title>
        <authorList>
            <person name="Pel H.J."/>
            <person name="de Winde J.H."/>
            <person name="Archer D.B."/>
            <person name="Dyer P.S."/>
            <person name="Hofmann G."/>
            <person name="Schaap P.J."/>
            <person name="Turner G."/>
            <person name="de Vries R.P."/>
            <person name="Albang R."/>
            <person name="Albermann K."/>
            <person name="Andersen M.R."/>
            <person name="Bendtsen J.D."/>
            <person name="Benen J.A.E."/>
            <person name="van den Berg M."/>
            <person name="Breestraat S."/>
            <person name="Caddick M.X."/>
            <person name="Contreras R."/>
            <person name="Cornell M."/>
            <person name="Coutinho P.M."/>
            <person name="Danchin E.G.J."/>
            <person name="Debets A.J.M."/>
            <person name="Dekker P."/>
            <person name="van Dijck P.W.M."/>
            <person name="van Dijk A."/>
            <person name="Dijkhuizen L."/>
            <person name="Driessen A.J.M."/>
            <person name="d'Enfert C."/>
            <person name="Geysens S."/>
            <person name="Goosen C."/>
            <person name="Groot G.S.P."/>
            <person name="de Groot P.W.J."/>
            <person name="Guillemette T."/>
            <person name="Henrissat B."/>
            <person name="Herweijer M."/>
            <person name="van den Hombergh J.P.T.W."/>
            <person name="van den Hondel C.A.M.J.J."/>
            <person name="van der Heijden R.T.J.M."/>
            <person name="van der Kaaij R.M."/>
            <person name="Klis F.M."/>
            <person name="Kools H.J."/>
            <person name="Kubicek C.P."/>
            <person name="van Kuyk P.A."/>
            <person name="Lauber J."/>
            <person name="Lu X."/>
            <person name="van der Maarel M.J.E.C."/>
            <person name="Meulenberg R."/>
            <person name="Menke H."/>
            <person name="Mortimer M.A."/>
            <person name="Nielsen J."/>
            <person name="Oliver S.G."/>
            <person name="Olsthoorn M."/>
            <person name="Pal K."/>
            <person name="van Peij N.N.M.E."/>
            <person name="Ram A.F.J."/>
            <person name="Rinas U."/>
            <person name="Roubos J.A."/>
            <person name="Sagt C.M.J."/>
            <person name="Schmoll M."/>
            <person name="Sun J."/>
            <person name="Ussery D."/>
            <person name="Varga J."/>
            <person name="Vervecken W."/>
            <person name="van de Vondervoort P.J.J."/>
            <person name="Wedler H."/>
            <person name="Woesten H.A.B."/>
            <person name="Zeng A.-P."/>
            <person name="van Ooyen A.J.J."/>
            <person name="Visser J."/>
            <person name="Stam H."/>
        </authorList>
    </citation>
    <scope>NUCLEOTIDE SEQUENCE [LARGE SCALE GENOMIC DNA]</scope>
    <source>
        <strain>ATCC MYA-4892 / CBS 513.88 / FGSC A1513</strain>
    </source>
</reference>
<keyword id="KW-0520">NAD</keyword>
<keyword id="KW-0560">Oxidoreductase</keyword>
<keyword id="KW-1185">Reference proteome</keyword>
<sequence length="388" mass="43231">MGKKAIQFGGGNIGRGFVAEFLHKAGYEVVFVDVMDKMVEALQQNKSYKVTEVSEEGEHTTTITNYRAINSKTHESDVIQEIATADVVTCAVGPNILKFIAPVIAKGIDARTESKPVAVIACENAIGATDTLHGFIKQHTSQDRVESLYDRAQFANSAIDRIVPQQAPNSGLDVRIEKFYEWAVEKTPFGSVGHPDIPAIHWVDNLEPYIERKLFTVNTSHATTAYFGHFRGKKMIADALEDKEIRGLVHKVLEETASLIVAKHDISEEEQKEYVEKIVSRISNPYLEDNVDRVGRAPLRKLSRKERFIGPASQLAERGMKYDSLMDAVEMALRFQNVPGDDESAELANILQEQPAEDATTNLTGLEKEHPLYPAVLDRVRKVQQGTK</sequence>
<comment type="function">
    <text evidence="1">Catalyzes the NAD(H)-dependent interconversion of D-fructose 6-phosphate and D-mannitol 1-phosphate in the metabolism of mannitol. Has a strong preference for NADH over NADPH (By similarity).</text>
</comment>
<comment type="catalytic activity">
    <reaction>
        <text>D-mannitol 1-phosphate + NAD(+) = beta-D-fructose 6-phosphate + NADH + H(+)</text>
        <dbReference type="Rhea" id="RHEA:19661"/>
        <dbReference type="ChEBI" id="CHEBI:15378"/>
        <dbReference type="ChEBI" id="CHEBI:57540"/>
        <dbReference type="ChEBI" id="CHEBI:57634"/>
        <dbReference type="ChEBI" id="CHEBI:57945"/>
        <dbReference type="ChEBI" id="CHEBI:61381"/>
        <dbReference type="EC" id="1.1.1.17"/>
    </reaction>
</comment>
<comment type="subunit">
    <text evidence="1">Monomer.</text>
</comment>
<comment type="similarity">
    <text evidence="2">Belongs to the mannitol dehydrogenase family.</text>
</comment>
<gene>
    <name type="primary">mpdA</name>
    <name type="ORF">An02g05830</name>
</gene>